<keyword id="KW-0963">Cytoplasm</keyword>
<keyword id="KW-0489">Methyltransferase</keyword>
<keyword id="KW-1185">Reference proteome</keyword>
<keyword id="KW-0698">rRNA processing</keyword>
<keyword id="KW-0949">S-adenosyl-L-methionine</keyword>
<keyword id="KW-0808">Transferase</keyword>
<sequence>MRIGIVAVGRLKAGPEKDLVSRYLDRFAKAGPASGLEFSRVNELPESRASNSATRKREEAVQIEKSLPDNPLVVALDERGKSWDSQEFATYVGDHKDRGRRDMVIVIGGADGLDPDFRDRADLVLNLGKMTWPHQLVRIMLAEQLYRAVTILSGHPYHRS</sequence>
<proteinExistence type="inferred from homology"/>
<feature type="chain" id="PRO_1000199807" description="Ribosomal RNA large subunit methyltransferase H">
    <location>
        <begin position="1"/>
        <end position="160"/>
    </location>
</feature>
<feature type="region of interest" description="Disordered" evidence="2">
    <location>
        <begin position="44"/>
        <end position="63"/>
    </location>
</feature>
<feature type="binding site" evidence="1">
    <location>
        <position position="76"/>
    </location>
    <ligand>
        <name>S-adenosyl-L-methionine</name>
        <dbReference type="ChEBI" id="CHEBI:59789"/>
    </ligand>
</feature>
<feature type="binding site" evidence="1">
    <location>
        <position position="108"/>
    </location>
    <ligand>
        <name>S-adenosyl-L-methionine</name>
        <dbReference type="ChEBI" id="CHEBI:59789"/>
    </ligand>
</feature>
<feature type="binding site" evidence="1">
    <location>
        <begin position="127"/>
        <end position="132"/>
    </location>
    <ligand>
        <name>S-adenosyl-L-methionine</name>
        <dbReference type="ChEBI" id="CHEBI:59789"/>
    </ligand>
</feature>
<organism>
    <name type="scientific">Allorhizobium ampelinum (strain ATCC BAA-846 / DSM 112012 / S4)</name>
    <name type="common">Agrobacterium vitis (strain S4)</name>
    <dbReference type="NCBI Taxonomy" id="311402"/>
    <lineage>
        <taxon>Bacteria</taxon>
        <taxon>Pseudomonadati</taxon>
        <taxon>Pseudomonadota</taxon>
        <taxon>Alphaproteobacteria</taxon>
        <taxon>Hyphomicrobiales</taxon>
        <taxon>Rhizobiaceae</taxon>
        <taxon>Rhizobium/Agrobacterium group</taxon>
        <taxon>Allorhizobium</taxon>
        <taxon>Allorhizobium ampelinum</taxon>
    </lineage>
</organism>
<protein>
    <recommendedName>
        <fullName evidence="1">Ribosomal RNA large subunit methyltransferase H</fullName>
        <ecNumber evidence="1">2.1.1.177</ecNumber>
    </recommendedName>
    <alternativeName>
        <fullName evidence="1">23S rRNA (pseudouridine1915-N3)-methyltransferase</fullName>
    </alternativeName>
    <alternativeName>
        <fullName evidence="1">23S rRNA m3Psi1915 methyltransferase</fullName>
    </alternativeName>
    <alternativeName>
        <fullName evidence="1">rRNA (pseudouridine-N3-)-methyltransferase RlmH</fullName>
    </alternativeName>
</protein>
<accession>B9JUH4</accession>
<reference key="1">
    <citation type="journal article" date="2009" name="J. Bacteriol.">
        <title>Genome sequences of three Agrobacterium biovars help elucidate the evolution of multichromosome genomes in bacteria.</title>
        <authorList>
            <person name="Slater S.C."/>
            <person name="Goldman B.S."/>
            <person name="Goodner B."/>
            <person name="Setubal J.C."/>
            <person name="Farrand S.K."/>
            <person name="Nester E.W."/>
            <person name="Burr T.J."/>
            <person name="Banta L."/>
            <person name="Dickerman A.W."/>
            <person name="Paulsen I."/>
            <person name="Otten L."/>
            <person name="Suen G."/>
            <person name="Welch R."/>
            <person name="Almeida N.F."/>
            <person name="Arnold F."/>
            <person name="Burton O.T."/>
            <person name="Du Z."/>
            <person name="Ewing A."/>
            <person name="Godsy E."/>
            <person name="Heisel S."/>
            <person name="Houmiel K.L."/>
            <person name="Jhaveri J."/>
            <person name="Lu J."/>
            <person name="Miller N.M."/>
            <person name="Norton S."/>
            <person name="Chen Q."/>
            <person name="Phoolcharoen W."/>
            <person name="Ohlin V."/>
            <person name="Ondrusek D."/>
            <person name="Pride N."/>
            <person name="Stricklin S.L."/>
            <person name="Sun J."/>
            <person name="Wheeler C."/>
            <person name="Wilson L."/>
            <person name="Zhu H."/>
            <person name="Wood D.W."/>
        </authorList>
    </citation>
    <scope>NUCLEOTIDE SEQUENCE [LARGE SCALE GENOMIC DNA]</scope>
    <source>
        <strain>ATCC BAA-846 / DSM 112012 / S4</strain>
    </source>
</reference>
<name>RLMH_ALLAM</name>
<comment type="function">
    <text evidence="1">Specifically methylates the pseudouridine at position 1915 (m3Psi1915) in 23S rRNA.</text>
</comment>
<comment type="catalytic activity">
    <reaction evidence="1">
        <text>pseudouridine(1915) in 23S rRNA + S-adenosyl-L-methionine = N(3)-methylpseudouridine(1915) in 23S rRNA + S-adenosyl-L-homocysteine + H(+)</text>
        <dbReference type="Rhea" id="RHEA:42752"/>
        <dbReference type="Rhea" id="RHEA-COMP:10221"/>
        <dbReference type="Rhea" id="RHEA-COMP:10222"/>
        <dbReference type="ChEBI" id="CHEBI:15378"/>
        <dbReference type="ChEBI" id="CHEBI:57856"/>
        <dbReference type="ChEBI" id="CHEBI:59789"/>
        <dbReference type="ChEBI" id="CHEBI:65314"/>
        <dbReference type="ChEBI" id="CHEBI:74486"/>
        <dbReference type="EC" id="2.1.1.177"/>
    </reaction>
</comment>
<comment type="subunit">
    <text evidence="1">Homodimer.</text>
</comment>
<comment type="subcellular location">
    <subcellularLocation>
        <location evidence="1">Cytoplasm</location>
    </subcellularLocation>
</comment>
<comment type="similarity">
    <text evidence="1">Belongs to the RNA methyltransferase RlmH family.</text>
</comment>
<dbReference type="EC" id="2.1.1.177" evidence="1"/>
<dbReference type="EMBL" id="CP000633">
    <property type="protein sequence ID" value="ACM38097.1"/>
    <property type="molecule type" value="Genomic_DNA"/>
</dbReference>
<dbReference type="RefSeq" id="WP_015917508.1">
    <property type="nucleotide sequence ID" value="NC_011989.1"/>
</dbReference>
<dbReference type="SMR" id="B9JUH4"/>
<dbReference type="STRING" id="311402.Avi_4277"/>
<dbReference type="KEGG" id="avi:Avi_4277"/>
<dbReference type="eggNOG" id="COG1576">
    <property type="taxonomic scope" value="Bacteria"/>
</dbReference>
<dbReference type="HOGENOM" id="CLU_100552_1_1_5"/>
<dbReference type="Proteomes" id="UP000001596">
    <property type="component" value="Chromosome 1"/>
</dbReference>
<dbReference type="GO" id="GO:0005737">
    <property type="term" value="C:cytoplasm"/>
    <property type="evidence" value="ECO:0007669"/>
    <property type="project" value="UniProtKB-SubCell"/>
</dbReference>
<dbReference type="GO" id="GO:0070038">
    <property type="term" value="F:rRNA (pseudouridine-N3-)-methyltransferase activity"/>
    <property type="evidence" value="ECO:0007669"/>
    <property type="project" value="UniProtKB-UniRule"/>
</dbReference>
<dbReference type="CDD" id="cd18081">
    <property type="entry name" value="RlmH-like"/>
    <property type="match status" value="1"/>
</dbReference>
<dbReference type="Gene3D" id="3.40.1280.10">
    <property type="match status" value="1"/>
</dbReference>
<dbReference type="HAMAP" id="MF_00658">
    <property type="entry name" value="23SrRNA_methyltr_H"/>
    <property type="match status" value="1"/>
</dbReference>
<dbReference type="InterPro" id="IPR029028">
    <property type="entry name" value="Alpha/beta_knot_MTases"/>
</dbReference>
<dbReference type="InterPro" id="IPR003742">
    <property type="entry name" value="RlmH-like"/>
</dbReference>
<dbReference type="InterPro" id="IPR029026">
    <property type="entry name" value="tRNA_m1G_MTases_N"/>
</dbReference>
<dbReference type="NCBIfam" id="NF000989">
    <property type="entry name" value="PRK00103.2-3"/>
    <property type="match status" value="1"/>
</dbReference>
<dbReference type="PANTHER" id="PTHR33603">
    <property type="entry name" value="METHYLTRANSFERASE"/>
    <property type="match status" value="1"/>
</dbReference>
<dbReference type="PANTHER" id="PTHR33603:SF1">
    <property type="entry name" value="RIBOSOMAL RNA LARGE SUBUNIT METHYLTRANSFERASE H"/>
    <property type="match status" value="1"/>
</dbReference>
<dbReference type="Pfam" id="PF02590">
    <property type="entry name" value="SPOUT_MTase"/>
    <property type="match status" value="1"/>
</dbReference>
<dbReference type="PIRSF" id="PIRSF004505">
    <property type="entry name" value="MT_bac"/>
    <property type="match status" value="1"/>
</dbReference>
<dbReference type="SUPFAM" id="SSF75217">
    <property type="entry name" value="alpha/beta knot"/>
    <property type="match status" value="1"/>
</dbReference>
<evidence type="ECO:0000255" key="1">
    <source>
        <dbReference type="HAMAP-Rule" id="MF_00658"/>
    </source>
</evidence>
<evidence type="ECO:0000256" key="2">
    <source>
        <dbReference type="SAM" id="MobiDB-lite"/>
    </source>
</evidence>
<gene>
    <name evidence="1" type="primary">rlmH</name>
    <name type="ordered locus">Avi_4277</name>
</gene>